<protein>
    <recommendedName>
        <fullName evidence="1">Urease subunit beta</fullName>
        <ecNumber evidence="1">3.5.1.5</ecNumber>
    </recommendedName>
    <alternativeName>
        <fullName evidence="1">Urea amidohydrolase subunit beta</fullName>
    </alternativeName>
</protein>
<comment type="catalytic activity">
    <reaction evidence="1">
        <text>urea + 2 H2O + H(+) = hydrogencarbonate + 2 NH4(+)</text>
        <dbReference type="Rhea" id="RHEA:20557"/>
        <dbReference type="ChEBI" id="CHEBI:15377"/>
        <dbReference type="ChEBI" id="CHEBI:15378"/>
        <dbReference type="ChEBI" id="CHEBI:16199"/>
        <dbReference type="ChEBI" id="CHEBI:17544"/>
        <dbReference type="ChEBI" id="CHEBI:28938"/>
        <dbReference type="EC" id="3.5.1.5"/>
    </reaction>
</comment>
<comment type="pathway">
    <text evidence="1">Nitrogen metabolism; urea degradation; CO(2) and NH(3) from urea (urease route): step 1/1.</text>
</comment>
<comment type="subunit">
    <text evidence="1">Heterotrimer of UreA (gamma), UreB (beta) and UreC (alpha) subunits. Three heterotrimers associate to form the active enzyme.</text>
</comment>
<comment type="subcellular location">
    <subcellularLocation>
        <location evidence="1">Cytoplasm</location>
    </subcellularLocation>
</comment>
<comment type="similarity">
    <text evidence="1">Belongs to the urease beta subunit family.</text>
</comment>
<gene>
    <name evidence="1" type="primary">ureB</name>
    <name type="ordered locus">Bcen_0422</name>
</gene>
<accession>Q1BYH1</accession>
<evidence type="ECO:0000255" key="1">
    <source>
        <dbReference type="HAMAP-Rule" id="MF_01954"/>
    </source>
</evidence>
<name>URE2_BURO1</name>
<sequence>MIPGEILTDDGEHELNAGRATLSLVVANTGDRPVQVGSHYHFFEVNDALSFDRAAARGFRLNIAAGTAVRFEPGQTRTVELVALAGERAVYGFQGKVMGPL</sequence>
<feature type="chain" id="PRO_1000070719" description="Urease subunit beta">
    <location>
        <begin position="1"/>
        <end position="101"/>
    </location>
</feature>
<organism>
    <name type="scientific">Burkholderia orbicola (strain AU 1054)</name>
    <dbReference type="NCBI Taxonomy" id="331271"/>
    <lineage>
        <taxon>Bacteria</taxon>
        <taxon>Pseudomonadati</taxon>
        <taxon>Pseudomonadota</taxon>
        <taxon>Betaproteobacteria</taxon>
        <taxon>Burkholderiales</taxon>
        <taxon>Burkholderiaceae</taxon>
        <taxon>Burkholderia</taxon>
        <taxon>Burkholderia cepacia complex</taxon>
        <taxon>Burkholderia orbicola</taxon>
    </lineage>
</organism>
<dbReference type="EC" id="3.5.1.5" evidence="1"/>
<dbReference type="EMBL" id="CP000378">
    <property type="protein sequence ID" value="ABF75334.1"/>
    <property type="molecule type" value="Genomic_DNA"/>
</dbReference>
<dbReference type="SMR" id="Q1BYH1"/>
<dbReference type="HOGENOM" id="CLU_129707_1_1_4"/>
<dbReference type="UniPathway" id="UPA00258">
    <property type="reaction ID" value="UER00370"/>
</dbReference>
<dbReference type="GO" id="GO:0035550">
    <property type="term" value="C:urease complex"/>
    <property type="evidence" value="ECO:0007669"/>
    <property type="project" value="InterPro"/>
</dbReference>
<dbReference type="GO" id="GO:0009039">
    <property type="term" value="F:urease activity"/>
    <property type="evidence" value="ECO:0007669"/>
    <property type="project" value="UniProtKB-UniRule"/>
</dbReference>
<dbReference type="GO" id="GO:0043419">
    <property type="term" value="P:urea catabolic process"/>
    <property type="evidence" value="ECO:0007669"/>
    <property type="project" value="UniProtKB-UniRule"/>
</dbReference>
<dbReference type="CDD" id="cd00407">
    <property type="entry name" value="Urease_beta"/>
    <property type="match status" value="1"/>
</dbReference>
<dbReference type="FunFam" id="2.10.150.10:FF:000001">
    <property type="entry name" value="Urease subunit beta"/>
    <property type="match status" value="1"/>
</dbReference>
<dbReference type="Gene3D" id="2.10.150.10">
    <property type="entry name" value="Urease, beta subunit"/>
    <property type="match status" value="1"/>
</dbReference>
<dbReference type="HAMAP" id="MF_01954">
    <property type="entry name" value="Urease_beta"/>
    <property type="match status" value="1"/>
</dbReference>
<dbReference type="InterPro" id="IPR002019">
    <property type="entry name" value="Urease_beta-like"/>
</dbReference>
<dbReference type="InterPro" id="IPR036461">
    <property type="entry name" value="Urease_betasu_sf"/>
</dbReference>
<dbReference type="InterPro" id="IPR050069">
    <property type="entry name" value="Urease_subunit"/>
</dbReference>
<dbReference type="NCBIfam" id="NF009682">
    <property type="entry name" value="PRK13203.1"/>
    <property type="match status" value="1"/>
</dbReference>
<dbReference type="NCBIfam" id="TIGR00192">
    <property type="entry name" value="urease_beta"/>
    <property type="match status" value="1"/>
</dbReference>
<dbReference type="PANTHER" id="PTHR33569">
    <property type="entry name" value="UREASE"/>
    <property type="match status" value="1"/>
</dbReference>
<dbReference type="PANTHER" id="PTHR33569:SF1">
    <property type="entry name" value="UREASE"/>
    <property type="match status" value="1"/>
</dbReference>
<dbReference type="Pfam" id="PF00699">
    <property type="entry name" value="Urease_beta"/>
    <property type="match status" value="1"/>
</dbReference>
<dbReference type="SUPFAM" id="SSF51278">
    <property type="entry name" value="Urease, beta-subunit"/>
    <property type="match status" value="1"/>
</dbReference>
<keyword id="KW-0963">Cytoplasm</keyword>
<keyword id="KW-0378">Hydrolase</keyword>
<proteinExistence type="inferred from homology"/>
<reference key="1">
    <citation type="submission" date="2006-05" db="EMBL/GenBank/DDBJ databases">
        <title>Complete sequence of chromosome 1 of Burkholderia cenocepacia AU 1054.</title>
        <authorList>
            <consortium name="US DOE Joint Genome Institute"/>
            <person name="Copeland A."/>
            <person name="Lucas S."/>
            <person name="Lapidus A."/>
            <person name="Barry K."/>
            <person name="Detter J.C."/>
            <person name="Glavina del Rio T."/>
            <person name="Hammon N."/>
            <person name="Israni S."/>
            <person name="Dalin E."/>
            <person name="Tice H."/>
            <person name="Pitluck S."/>
            <person name="Chain P."/>
            <person name="Malfatti S."/>
            <person name="Shin M."/>
            <person name="Vergez L."/>
            <person name="Schmutz J."/>
            <person name="Larimer F."/>
            <person name="Land M."/>
            <person name="Hauser L."/>
            <person name="Kyrpides N."/>
            <person name="Lykidis A."/>
            <person name="LiPuma J.J."/>
            <person name="Konstantinidis K."/>
            <person name="Tiedje J.M."/>
            <person name="Richardson P."/>
        </authorList>
    </citation>
    <scope>NUCLEOTIDE SEQUENCE [LARGE SCALE GENOMIC DNA]</scope>
    <source>
        <strain>AU 1054</strain>
    </source>
</reference>